<accession>Q8KCE8</accession>
<proteinExistence type="inferred from homology"/>
<evidence type="ECO:0000255" key="1">
    <source>
        <dbReference type="HAMAP-Rule" id="MF_01708"/>
    </source>
</evidence>
<sequence length="247" mass="26920">MQLQVARHRPGTGEDRLMLEARKLVKSYALPGQPPLKILDGIDLSVAPGEMVTVIGASGSGKTTLLNLLGTLDTPDEGELIFDGSPVFQGSRCLLSKKELAAFRNRKIGFVFQFHHLLSDFTALENVAMAEFIGTGKLKPAKERAAVLLEKLGLKARLDHLPSELSGGEQQRVAIARALMNKPKLVLADEPSGNLDSRNSRMLYELMASLSKERQTSFVIVTHNEEFAATADRCLHMQDGRLQACGG</sequence>
<feature type="chain" id="PRO_0000092431" description="Lipoprotein-releasing system ATP-binding protein LolD 2">
    <location>
        <begin position="1"/>
        <end position="247"/>
    </location>
</feature>
<feature type="domain" description="ABC transporter" evidence="1">
    <location>
        <begin position="19"/>
        <end position="247"/>
    </location>
</feature>
<feature type="binding site" evidence="1">
    <location>
        <begin position="56"/>
        <end position="63"/>
    </location>
    <ligand>
        <name>ATP</name>
        <dbReference type="ChEBI" id="CHEBI:30616"/>
    </ligand>
</feature>
<dbReference type="EC" id="7.6.2.-" evidence="1"/>
<dbReference type="EMBL" id="AE006470">
    <property type="protein sequence ID" value="AAM72701.1"/>
    <property type="molecule type" value="Genomic_DNA"/>
</dbReference>
<dbReference type="RefSeq" id="NP_662359.1">
    <property type="nucleotide sequence ID" value="NC_002932.3"/>
</dbReference>
<dbReference type="SMR" id="Q8KCE8"/>
<dbReference type="STRING" id="194439.CT1474"/>
<dbReference type="EnsemblBacteria" id="AAM72701">
    <property type="protein sequence ID" value="AAM72701"/>
    <property type="gene ID" value="CT1474"/>
</dbReference>
<dbReference type="KEGG" id="cte:CT1474"/>
<dbReference type="PATRIC" id="fig|194439.7.peg.1336"/>
<dbReference type="eggNOG" id="COG1136">
    <property type="taxonomic scope" value="Bacteria"/>
</dbReference>
<dbReference type="HOGENOM" id="CLU_000604_1_22_10"/>
<dbReference type="OrthoDB" id="9769100at2"/>
<dbReference type="Proteomes" id="UP000001007">
    <property type="component" value="Chromosome"/>
</dbReference>
<dbReference type="GO" id="GO:0005886">
    <property type="term" value="C:plasma membrane"/>
    <property type="evidence" value="ECO:0007669"/>
    <property type="project" value="UniProtKB-SubCell"/>
</dbReference>
<dbReference type="GO" id="GO:0005524">
    <property type="term" value="F:ATP binding"/>
    <property type="evidence" value="ECO:0007669"/>
    <property type="project" value="UniProtKB-KW"/>
</dbReference>
<dbReference type="GO" id="GO:0016887">
    <property type="term" value="F:ATP hydrolysis activity"/>
    <property type="evidence" value="ECO:0007669"/>
    <property type="project" value="InterPro"/>
</dbReference>
<dbReference type="GO" id="GO:0022857">
    <property type="term" value="F:transmembrane transporter activity"/>
    <property type="evidence" value="ECO:0007669"/>
    <property type="project" value="TreeGrafter"/>
</dbReference>
<dbReference type="CDD" id="cd03255">
    <property type="entry name" value="ABC_MJ0796_LolCDE_FtsE"/>
    <property type="match status" value="1"/>
</dbReference>
<dbReference type="FunFam" id="3.40.50.300:FF:000032">
    <property type="entry name" value="Export ABC transporter ATP-binding protein"/>
    <property type="match status" value="1"/>
</dbReference>
<dbReference type="Gene3D" id="3.40.50.300">
    <property type="entry name" value="P-loop containing nucleotide triphosphate hydrolases"/>
    <property type="match status" value="1"/>
</dbReference>
<dbReference type="InterPro" id="IPR003593">
    <property type="entry name" value="AAA+_ATPase"/>
</dbReference>
<dbReference type="InterPro" id="IPR003439">
    <property type="entry name" value="ABC_transporter-like_ATP-bd"/>
</dbReference>
<dbReference type="InterPro" id="IPR017871">
    <property type="entry name" value="ABC_transporter-like_CS"/>
</dbReference>
<dbReference type="InterPro" id="IPR015854">
    <property type="entry name" value="ABC_transpr_LolD-like"/>
</dbReference>
<dbReference type="InterPro" id="IPR017911">
    <property type="entry name" value="MacB-like_ATP-bd"/>
</dbReference>
<dbReference type="InterPro" id="IPR027417">
    <property type="entry name" value="P-loop_NTPase"/>
</dbReference>
<dbReference type="PANTHER" id="PTHR24220">
    <property type="entry name" value="IMPORT ATP-BINDING PROTEIN"/>
    <property type="match status" value="1"/>
</dbReference>
<dbReference type="PANTHER" id="PTHR24220:SF689">
    <property type="entry name" value="LIPOPROTEIN-RELEASING SYSTEM ATP-BINDING PROTEIN LOLD"/>
    <property type="match status" value="1"/>
</dbReference>
<dbReference type="Pfam" id="PF00005">
    <property type="entry name" value="ABC_tran"/>
    <property type="match status" value="1"/>
</dbReference>
<dbReference type="SMART" id="SM00382">
    <property type="entry name" value="AAA"/>
    <property type="match status" value="1"/>
</dbReference>
<dbReference type="SUPFAM" id="SSF52540">
    <property type="entry name" value="P-loop containing nucleoside triphosphate hydrolases"/>
    <property type="match status" value="1"/>
</dbReference>
<dbReference type="PROSITE" id="PS00211">
    <property type="entry name" value="ABC_TRANSPORTER_1"/>
    <property type="match status" value="1"/>
</dbReference>
<dbReference type="PROSITE" id="PS50893">
    <property type="entry name" value="ABC_TRANSPORTER_2"/>
    <property type="match status" value="1"/>
</dbReference>
<dbReference type="PROSITE" id="PS51244">
    <property type="entry name" value="LOLD"/>
    <property type="match status" value="1"/>
</dbReference>
<gene>
    <name evidence="1" type="primary">lolD2</name>
    <name type="ordered locus">CT1474</name>
</gene>
<keyword id="KW-0067">ATP-binding</keyword>
<keyword id="KW-0997">Cell inner membrane</keyword>
<keyword id="KW-1003">Cell membrane</keyword>
<keyword id="KW-0472">Membrane</keyword>
<keyword id="KW-0547">Nucleotide-binding</keyword>
<keyword id="KW-1185">Reference proteome</keyword>
<keyword id="KW-1278">Translocase</keyword>
<keyword id="KW-0813">Transport</keyword>
<organism>
    <name type="scientific">Chlorobaculum tepidum (strain ATCC 49652 / DSM 12025 / NBRC 103806 / TLS)</name>
    <name type="common">Chlorobium tepidum</name>
    <dbReference type="NCBI Taxonomy" id="194439"/>
    <lineage>
        <taxon>Bacteria</taxon>
        <taxon>Pseudomonadati</taxon>
        <taxon>Chlorobiota</taxon>
        <taxon>Chlorobiia</taxon>
        <taxon>Chlorobiales</taxon>
        <taxon>Chlorobiaceae</taxon>
        <taxon>Chlorobaculum</taxon>
    </lineage>
</organism>
<protein>
    <recommendedName>
        <fullName evidence="1">Lipoprotein-releasing system ATP-binding protein LolD 2</fullName>
        <ecNumber evidence="1">7.6.2.-</ecNumber>
    </recommendedName>
</protein>
<comment type="function">
    <text evidence="1">Part of the ABC transporter complex LolCDE involved in the translocation of mature outer membrane-directed lipoproteins, from the inner membrane to the periplasmic chaperone, LolA. Responsible for the formation of the LolA-lipoprotein complex in an ATP-dependent manner.</text>
</comment>
<comment type="subunit">
    <text evidence="1">The complex is composed of two ATP-binding proteins (LolD) and two transmembrane proteins (LolC and LolE).</text>
</comment>
<comment type="subcellular location">
    <subcellularLocation>
        <location evidence="1">Cell inner membrane</location>
        <topology evidence="1">Peripheral membrane protein</topology>
    </subcellularLocation>
</comment>
<comment type="similarity">
    <text evidence="1">Belongs to the ABC transporter superfamily. Lipoprotein translocase (TC 3.A.1.125) family.</text>
</comment>
<name>LOLD2_CHLTE</name>
<reference key="1">
    <citation type="journal article" date="2002" name="Proc. Natl. Acad. Sci. U.S.A.">
        <title>The complete genome sequence of Chlorobium tepidum TLS, a photosynthetic, anaerobic, green-sulfur bacterium.</title>
        <authorList>
            <person name="Eisen J.A."/>
            <person name="Nelson K.E."/>
            <person name="Paulsen I.T."/>
            <person name="Heidelberg J.F."/>
            <person name="Wu M."/>
            <person name="Dodson R.J."/>
            <person name="DeBoy R.T."/>
            <person name="Gwinn M.L."/>
            <person name="Nelson W.C."/>
            <person name="Haft D.H."/>
            <person name="Hickey E.K."/>
            <person name="Peterson J.D."/>
            <person name="Durkin A.S."/>
            <person name="Kolonay J.F."/>
            <person name="Yang F."/>
            <person name="Holt I.E."/>
            <person name="Umayam L.A."/>
            <person name="Mason T.M."/>
            <person name="Brenner M."/>
            <person name="Shea T.P."/>
            <person name="Parksey D.S."/>
            <person name="Nierman W.C."/>
            <person name="Feldblyum T.V."/>
            <person name="Hansen C.L."/>
            <person name="Craven M.B."/>
            <person name="Radune D."/>
            <person name="Vamathevan J.J."/>
            <person name="Khouri H.M."/>
            <person name="White O."/>
            <person name="Gruber T.M."/>
            <person name="Ketchum K.A."/>
            <person name="Venter J.C."/>
            <person name="Tettelin H."/>
            <person name="Bryant D.A."/>
            <person name="Fraser C.M."/>
        </authorList>
    </citation>
    <scope>NUCLEOTIDE SEQUENCE [LARGE SCALE GENOMIC DNA]</scope>
    <source>
        <strain>ATCC 49652 / DSM 12025 / NBRC 103806 / TLS</strain>
    </source>
</reference>